<feature type="chain" id="PRO_1000098324" description="Probable cytosol aminopeptidase">
    <location>
        <begin position="1"/>
        <end position="496"/>
    </location>
</feature>
<feature type="active site" evidence="1">
    <location>
        <position position="270"/>
    </location>
</feature>
<feature type="active site" evidence="1">
    <location>
        <position position="344"/>
    </location>
</feature>
<feature type="binding site" evidence="1">
    <location>
        <position position="258"/>
    </location>
    <ligand>
        <name>Mn(2+)</name>
        <dbReference type="ChEBI" id="CHEBI:29035"/>
        <label>2</label>
    </ligand>
</feature>
<feature type="binding site" evidence="1">
    <location>
        <position position="263"/>
    </location>
    <ligand>
        <name>Mn(2+)</name>
        <dbReference type="ChEBI" id="CHEBI:29035"/>
        <label>1</label>
    </ligand>
</feature>
<feature type="binding site" evidence="1">
    <location>
        <position position="263"/>
    </location>
    <ligand>
        <name>Mn(2+)</name>
        <dbReference type="ChEBI" id="CHEBI:29035"/>
        <label>2</label>
    </ligand>
</feature>
<feature type="binding site" evidence="1">
    <location>
        <position position="281"/>
    </location>
    <ligand>
        <name>Mn(2+)</name>
        <dbReference type="ChEBI" id="CHEBI:29035"/>
        <label>2</label>
    </ligand>
</feature>
<feature type="binding site" evidence="1">
    <location>
        <position position="340"/>
    </location>
    <ligand>
        <name>Mn(2+)</name>
        <dbReference type="ChEBI" id="CHEBI:29035"/>
        <label>1</label>
    </ligand>
</feature>
<feature type="binding site" evidence="1">
    <location>
        <position position="342"/>
    </location>
    <ligand>
        <name>Mn(2+)</name>
        <dbReference type="ChEBI" id="CHEBI:29035"/>
        <label>1</label>
    </ligand>
</feature>
<feature type="binding site" evidence="1">
    <location>
        <position position="342"/>
    </location>
    <ligand>
        <name>Mn(2+)</name>
        <dbReference type="ChEBI" id="CHEBI:29035"/>
        <label>2</label>
    </ligand>
</feature>
<evidence type="ECO:0000255" key="1">
    <source>
        <dbReference type="HAMAP-Rule" id="MF_00181"/>
    </source>
</evidence>
<accession>B6JLF2</accession>
<name>AMPA_HELP2</name>
<keyword id="KW-0031">Aminopeptidase</keyword>
<keyword id="KW-0963">Cytoplasm</keyword>
<keyword id="KW-0378">Hydrolase</keyword>
<keyword id="KW-0464">Manganese</keyword>
<keyword id="KW-0479">Metal-binding</keyword>
<keyword id="KW-0645">Protease</keyword>
<dbReference type="EC" id="3.4.11.1" evidence="1"/>
<dbReference type="EC" id="3.4.11.10" evidence="1"/>
<dbReference type="EMBL" id="CP001217">
    <property type="protein sequence ID" value="ACJ07730.1"/>
    <property type="molecule type" value="Genomic_DNA"/>
</dbReference>
<dbReference type="SMR" id="B6JLF2"/>
<dbReference type="MEROPS" id="M17.016"/>
<dbReference type="KEGG" id="hpp:HPP12_0576"/>
<dbReference type="HOGENOM" id="CLU_013734_6_1_7"/>
<dbReference type="Proteomes" id="UP000008198">
    <property type="component" value="Chromosome"/>
</dbReference>
<dbReference type="GO" id="GO:0005737">
    <property type="term" value="C:cytoplasm"/>
    <property type="evidence" value="ECO:0007669"/>
    <property type="project" value="UniProtKB-SubCell"/>
</dbReference>
<dbReference type="GO" id="GO:0030145">
    <property type="term" value="F:manganese ion binding"/>
    <property type="evidence" value="ECO:0007669"/>
    <property type="project" value="UniProtKB-UniRule"/>
</dbReference>
<dbReference type="GO" id="GO:0070006">
    <property type="term" value="F:metalloaminopeptidase activity"/>
    <property type="evidence" value="ECO:0007669"/>
    <property type="project" value="InterPro"/>
</dbReference>
<dbReference type="GO" id="GO:0006508">
    <property type="term" value="P:proteolysis"/>
    <property type="evidence" value="ECO:0007669"/>
    <property type="project" value="UniProtKB-KW"/>
</dbReference>
<dbReference type="CDD" id="cd00433">
    <property type="entry name" value="Peptidase_M17"/>
    <property type="match status" value="1"/>
</dbReference>
<dbReference type="Gene3D" id="3.40.220.10">
    <property type="entry name" value="Leucine Aminopeptidase, subunit E, domain 1"/>
    <property type="match status" value="1"/>
</dbReference>
<dbReference type="Gene3D" id="3.40.630.10">
    <property type="entry name" value="Zn peptidases"/>
    <property type="match status" value="1"/>
</dbReference>
<dbReference type="HAMAP" id="MF_00181">
    <property type="entry name" value="Cytosol_peptidase_M17"/>
    <property type="match status" value="1"/>
</dbReference>
<dbReference type="InterPro" id="IPR011356">
    <property type="entry name" value="Leucine_aapep/pepB"/>
</dbReference>
<dbReference type="InterPro" id="IPR043472">
    <property type="entry name" value="Macro_dom-like"/>
</dbReference>
<dbReference type="InterPro" id="IPR000819">
    <property type="entry name" value="Peptidase_M17_C"/>
</dbReference>
<dbReference type="InterPro" id="IPR023042">
    <property type="entry name" value="Peptidase_M17_leu_NH2_pept"/>
</dbReference>
<dbReference type="InterPro" id="IPR008283">
    <property type="entry name" value="Peptidase_M17_N"/>
</dbReference>
<dbReference type="NCBIfam" id="NF002079">
    <property type="entry name" value="PRK00913.3-1"/>
    <property type="match status" value="1"/>
</dbReference>
<dbReference type="NCBIfam" id="NF002081">
    <property type="entry name" value="PRK00913.3-3"/>
    <property type="match status" value="1"/>
</dbReference>
<dbReference type="PANTHER" id="PTHR11963:SF23">
    <property type="entry name" value="CYTOSOL AMINOPEPTIDASE"/>
    <property type="match status" value="1"/>
</dbReference>
<dbReference type="PANTHER" id="PTHR11963">
    <property type="entry name" value="LEUCINE AMINOPEPTIDASE-RELATED"/>
    <property type="match status" value="1"/>
</dbReference>
<dbReference type="Pfam" id="PF00883">
    <property type="entry name" value="Peptidase_M17"/>
    <property type="match status" value="1"/>
</dbReference>
<dbReference type="Pfam" id="PF02789">
    <property type="entry name" value="Peptidase_M17_N"/>
    <property type="match status" value="1"/>
</dbReference>
<dbReference type="PRINTS" id="PR00481">
    <property type="entry name" value="LAMNOPPTDASE"/>
</dbReference>
<dbReference type="SUPFAM" id="SSF52949">
    <property type="entry name" value="Macro domain-like"/>
    <property type="match status" value="1"/>
</dbReference>
<dbReference type="SUPFAM" id="SSF53187">
    <property type="entry name" value="Zn-dependent exopeptidases"/>
    <property type="match status" value="1"/>
</dbReference>
<dbReference type="PROSITE" id="PS00631">
    <property type="entry name" value="CYTOSOL_AP"/>
    <property type="match status" value="1"/>
</dbReference>
<reference key="1">
    <citation type="submission" date="2008-10" db="EMBL/GenBank/DDBJ databases">
        <title>The complete genome sequence of Helicobacter pylori strain P12.</title>
        <authorList>
            <person name="Fischer W."/>
            <person name="Windhager L."/>
            <person name="Karnholz A."/>
            <person name="Zeiller M."/>
            <person name="Zimmer R."/>
            <person name="Haas R."/>
        </authorList>
    </citation>
    <scope>NUCLEOTIDE SEQUENCE [LARGE SCALE GENOMIC DNA]</scope>
    <source>
        <strain>P12</strain>
    </source>
</reference>
<proteinExistence type="inferred from homology"/>
<organism>
    <name type="scientific">Helicobacter pylori (strain P12)</name>
    <dbReference type="NCBI Taxonomy" id="570508"/>
    <lineage>
        <taxon>Bacteria</taxon>
        <taxon>Pseudomonadati</taxon>
        <taxon>Campylobacterota</taxon>
        <taxon>Epsilonproteobacteria</taxon>
        <taxon>Campylobacterales</taxon>
        <taxon>Helicobacteraceae</taxon>
        <taxon>Helicobacter</taxon>
    </lineage>
</organism>
<comment type="function">
    <text evidence="1">Presumably involved in the processing and regular turnover of intracellular proteins. Catalyzes the removal of unsubstituted N-terminal amino acids from various peptides.</text>
</comment>
<comment type="catalytic activity">
    <reaction evidence="1">
        <text>Release of an N-terminal amino acid, Xaa-|-Yaa-, in which Xaa is preferably Leu, but may be other amino acids including Pro although not Arg or Lys, and Yaa may be Pro. Amino acid amides and methyl esters are also readily hydrolyzed, but rates on arylamides are exceedingly low.</text>
        <dbReference type="EC" id="3.4.11.1"/>
    </reaction>
</comment>
<comment type="catalytic activity">
    <reaction evidence="1">
        <text>Release of an N-terminal amino acid, preferentially leucine, but not glutamic or aspartic acids.</text>
        <dbReference type="EC" id="3.4.11.10"/>
    </reaction>
</comment>
<comment type="cofactor">
    <cofactor evidence="1">
        <name>Mn(2+)</name>
        <dbReference type="ChEBI" id="CHEBI:29035"/>
    </cofactor>
    <text evidence="1">Binds 2 manganese ions per subunit.</text>
</comment>
<comment type="subcellular location">
    <subcellularLocation>
        <location evidence="1">Cytoplasm</location>
    </subcellularLocation>
</comment>
<comment type="similarity">
    <text evidence="1">Belongs to the peptidase M17 family.</text>
</comment>
<sequence>MLKIKLEKTTFENTKAECGLVFIVNKDFSHAWVKNKELLETFKYESEGVFLDQENKILYVGVKEDDVHLLRESACLAVRTLKKLAFKSVKVGVYTCGTHSKDNALLENLKALFLGLKLGLYEYDTFKSNKKESVLKEAIVALELHKPCEKTCANSLEKNAKEALKYAEIMTESLNIVKDLVNTPPMIGTPVYMAEVAQKVAKENHLEIHVHDEKFLEEKKMNAFLAVNKASLGVNPPRLIHLVYKPKKAKKKIALVGKGLTYDCGGLSLKPADYMVTMKADKGGGSAVIGLLNALAKLGVEAEVHGIIGATENMIGPAAYKPDDILISKEGKSIEVRNTDAEGRLVLADCLSYAQDLNPDVIVDFATLTGACVVGLGEFTSAIMGHNEELKNLFETSGLESGELLAKLPFNRHLKKLIESKIADVCNISSSRYGGAITAGLFLNEFIRDEFKDKWLHIDIAGPAYVEKEWDVNSFGASGAGVRACTAFVEELLKKA</sequence>
<protein>
    <recommendedName>
        <fullName evidence="1">Probable cytosol aminopeptidase</fullName>
        <ecNumber evidence="1">3.4.11.1</ecNumber>
    </recommendedName>
    <alternativeName>
        <fullName evidence="1">Leucine aminopeptidase</fullName>
        <shortName evidence="1">LAP</shortName>
        <ecNumber evidence="1">3.4.11.10</ecNumber>
    </alternativeName>
    <alternativeName>
        <fullName evidence="1">Leucyl aminopeptidase</fullName>
    </alternativeName>
</protein>
<gene>
    <name evidence="1" type="primary">pepA</name>
    <name type="ordered locus">HPP12_0576</name>
</gene>